<keyword id="KW-0051">Antiviral defense</keyword>
<keyword id="KW-0963">Cytoplasm</keyword>
<keyword id="KW-0378">Hydrolase</keyword>
<keyword id="KW-0391">Immunity</keyword>
<keyword id="KW-0399">Innate immunity</keyword>
<keyword id="KW-0479">Metal-binding</keyword>
<keyword id="KW-0677">Repeat</keyword>
<keyword id="KW-0862">Zinc</keyword>
<feature type="chain" id="PRO_0000171771" description="DNA dC-&gt;dU-editing enzyme APOBEC3">
    <location>
        <begin position="1"/>
        <end position="396"/>
    </location>
</feature>
<feature type="domain" description="CMP/dCMP-type deaminase 1" evidence="2">
    <location>
        <begin position="38"/>
        <end position="154"/>
    </location>
</feature>
<feature type="domain" description="CMP/dCMP-type deaminase 2" evidence="2">
    <location>
        <begin position="205"/>
        <end position="324"/>
    </location>
</feature>
<feature type="active site" description="Proton donor" evidence="1">
    <location>
        <position position="73"/>
    </location>
</feature>
<feature type="binding site" evidence="1">
    <location>
        <position position="71"/>
    </location>
    <ligand>
        <name>Zn(2+)</name>
        <dbReference type="ChEBI" id="CHEBI:29105"/>
    </ligand>
</feature>
<feature type="binding site" evidence="1">
    <location>
        <position position="105"/>
    </location>
    <ligand>
        <name>Zn(2+)</name>
        <dbReference type="ChEBI" id="CHEBI:29105"/>
    </ligand>
</feature>
<feature type="binding site" evidence="1">
    <location>
        <position position="108"/>
    </location>
    <ligand>
        <name>Zn(2+)</name>
        <dbReference type="ChEBI" id="CHEBI:29105"/>
    </ligand>
</feature>
<feature type="binding site" evidence="1">
    <location>
        <position position="255"/>
    </location>
    <ligand>
        <name>Zn(2+)</name>
        <dbReference type="ChEBI" id="CHEBI:29105"/>
    </ligand>
</feature>
<feature type="binding site" evidence="1">
    <location>
        <position position="283"/>
    </location>
    <ligand>
        <name>Zn(2+)</name>
        <dbReference type="ChEBI" id="CHEBI:29105"/>
    </ligand>
</feature>
<feature type="binding site" evidence="1">
    <location>
        <position position="286"/>
    </location>
    <ligand>
        <name>Zn(2+)</name>
        <dbReference type="ChEBI" id="CHEBI:29105"/>
    </ligand>
</feature>
<evidence type="ECO:0000250" key="1"/>
<evidence type="ECO:0000255" key="2">
    <source>
        <dbReference type="PROSITE-ProRule" id="PRU01083"/>
    </source>
</evidence>
<evidence type="ECO:0000269" key="3">
    <source>
    </source>
</evidence>
<evidence type="ECO:0000305" key="4"/>
<organism>
    <name type="scientific">Cricetulus longicaudatus</name>
    <name type="common">Long-tailed dwarf hamster</name>
    <dbReference type="NCBI Taxonomy" id="10030"/>
    <lineage>
        <taxon>Eukaryota</taxon>
        <taxon>Metazoa</taxon>
        <taxon>Chordata</taxon>
        <taxon>Craniata</taxon>
        <taxon>Vertebrata</taxon>
        <taxon>Euteleostomi</taxon>
        <taxon>Mammalia</taxon>
        <taxon>Eutheria</taxon>
        <taxon>Euarchontoglires</taxon>
        <taxon>Glires</taxon>
        <taxon>Rodentia</taxon>
        <taxon>Myomorpha</taxon>
        <taxon>Muroidea</taxon>
        <taxon>Cricetidae</taxon>
        <taxon>Cricetinae</taxon>
        <taxon>Cricetulus</taxon>
    </lineage>
</organism>
<sequence length="396" mass="47075">MGPFCLGCSHRKCYSPIRNLISQETFKFHFKNLGYAKGRKDTFLCYEVTRKDCDSPVSLHHGVFKNKGNIHAEVCFLYWFHDKVLKVLSPREEFKITWYMSWSPCFECAEQIVRFLATHHYLSLDIFSSRLYNVQDPETQQNLCRLVQEGAQVAAMDLYEFKKCWKKFVTMVAGDSGLGKRLLTNFRYQDSKLQEILRRMDPLSEEEFYSQFYNQRVKHLCYYHRMKPYLCYQLEQFNGQAPLKGCLLSEKGKQHAEILFLDKIRSMELSQVTITCYLTWSPCPNCAWRLAAFKRDRPDLILHIYTSRLYFHWKRPFQKGLCSLWQSGILVDVMDLPQFTDCWTNFVNPKRPFWPWKGLEIISRRTQRRLRRIKESWGLQDLVNDFGNLQLGPPMS</sequence>
<proteinExistence type="inferred from homology"/>
<dbReference type="EC" id="3.5.4.38"/>
<dbReference type="SMR" id="P60704"/>
<dbReference type="GO" id="GO:0005737">
    <property type="term" value="C:cytoplasm"/>
    <property type="evidence" value="ECO:0000250"/>
    <property type="project" value="UniProtKB"/>
</dbReference>
<dbReference type="GO" id="GO:0005634">
    <property type="term" value="C:nucleus"/>
    <property type="evidence" value="ECO:0007669"/>
    <property type="project" value="TreeGrafter"/>
</dbReference>
<dbReference type="GO" id="GO:0000932">
    <property type="term" value="C:P-body"/>
    <property type="evidence" value="ECO:0007669"/>
    <property type="project" value="TreeGrafter"/>
</dbReference>
<dbReference type="GO" id="GO:0004126">
    <property type="term" value="F:cytidine deaminase activity"/>
    <property type="evidence" value="ECO:0007669"/>
    <property type="project" value="TreeGrafter"/>
</dbReference>
<dbReference type="GO" id="GO:0003723">
    <property type="term" value="F:RNA binding"/>
    <property type="evidence" value="ECO:0007669"/>
    <property type="project" value="TreeGrafter"/>
</dbReference>
<dbReference type="GO" id="GO:0008270">
    <property type="term" value="F:zinc ion binding"/>
    <property type="evidence" value="ECO:0007669"/>
    <property type="project" value="InterPro"/>
</dbReference>
<dbReference type="GO" id="GO:0016554">
    <property type="term" value="P:cytidine to uridine editing"/>
    <property type="evidence" value="ECO:0007669"/>
    <property type="project" value="TreeGrafter"/>
</dbReference>
<dbReference type="GO" id="GO:0051607">
    <property type="term" value="P:defense response to virus"/>
    <property type="evidence" value="ECO:0007669"/>
    <property type="project" value="UniProtKB-KW"/>
</dbReference>
<dbReference type="GO" id="GO:0070383">
    <property type="term" value="P:DNA cytosine deamination"/>
    <property type="evidence" value="ECO:0007669"/>
    <property type="project" value="TreeGrafter"/>
</dbReference>
<dbReference type="GO" id="GO:0045087">
    <property type="term" value="P:innate immune response"/>
    <property type="evidence" value="ECO:0007669"/>
    <property type="project" value="UniProtKB-KW"/>
</dbReference>
<dbReference type="GO" id="GO:0045869">
    <property type="term" value="P:negative regulation of single stranded viral RNA replication via double stranded DNA intermediate"/>
    <property type="evidence" value="ECO:0007669"/>
    <property type="project" value="TreeGrafter"/>
</dbReference>
<dbReference type="GO" id="GO:0010526">
    <property type="term" value="P:transposable element silencing"/>
    <property type="evidence" value="ECO:0000250"/>
    <property type="project" value="UniProtKB"/>
</dbReference>
<dbReference type="CDD" id="cd01283">
    <property type="entry name" value="cytidine_deaminase"/>
    <property type="match status" value="2"/>
</dbReference>
<dbReference type="FunFam" id="3.40.140.10:FF:000079">
    <property type="entry name" value="DNA dC-&gt;dU-editing enzyme APOBEC-3"/>
    <property type="match status" value="1"/>
</dbReference>
<dbReference type="Gene3D" id="3.40.140.10">
    <property type="entry name" value="Cytidine Deaminase, domain 2"/>
    <property type="match status" value="2"/>
</dbReference>
<dbReference type="InterPro" id="IPR016192">
    <property type="entry name" value="APOBEC/CMP_deaminase_Zn-bd"/>
</dbReference>
<dbReference type="InterPro" id="IPR050610">
    <property type="entry name" value="APOBEC_Cyt_Deaminase"/>
</dbReference>
<dbReference type="InterPro" id="IPR002125">
    <property type="entry name" value="CMP_dCMP_dom"/>
</dbReference>
<dbReference type="InterPro" id="IPR016193">
    <property type="entry name" value="Cytidine_deaminase-like"/>
</dbReference>
<dbReference type="PANTHER" id="PTHR13857:SF43">
    <property type="entry name" value="DNA DC-DU-EDITING ENZYME APOBEC-3H"/>
    <property type="match status" value="1"/>
</dbReference>
<dbReference type="PANTHER" id="PTHR13857">
    <property type="entry name" value="MRNA EDITING ENZYME"/>
    <property type="match status" value="1"/>
</dbReference>
<dbReference type="Pfam" id="PF18772">
    <property type="entry name" value="APOBEC2"/>
    <property type="match status" value="1"/>
</dbReference>
<dbReference type="Pfam" id="PF18782">
    <property type="entry name" value="NAD2"/>
    <property type="match status" value="1"/>
</dbReference>
<dbReference type="SUPFAM" id="SSF53927">
    <property type="entry name" value="Cytidine deaminase-like"/>
    <property type="match status" value="2"/>
</dbReference>
<dbReference type="PROSITE" id="PS00903">
    <property type="entry name" value="CYT_DCMP_DEAMINASES_1"/>
    <property type="match status" value="2"/>
</dbReference>
<dbReference type="PROSITE" id="PS51747">
    <property type="entry name" value="CYT_DCMP_DEAMINASES_2"/>
    <property type="match status" value="2"/>
</dbReference>
<name>ABEC3_CRILO</name>
<protein>
    <recommendedName>
        <fullName>DNA dC-&gt;dU-editing enzyme APOBEC3</fullName>
        <ecNumber>3.5.4.38</ecNumber>
    </recommendedName>
</protein>
<comment type="function">
    <text evidence="3">DNA deaminase (cytidine deaminase) which acts as an inhibitor of retrovirus replication and retrotransposon mobility via deaminase-dependent and -independent mechanisms. Selectively targets single-stranded DNA and does not deaminate double-stranded DNA or single- or double-stranded RNA.</text>
</comment>
<comment type="catalytic activity">
    <reaction>
        <text>a 2'-deoxycytidine in single-stranded DNA + H2O + H(+) = a 2'-deoxyuridine in single-stranded DNA + NH4(+)</text>
        <dbReference type="Rhea" id="RHEA:50948"/>
        <dbReference type="Rhea" id="RHEA-COMP:12846"/>
        <dbReference type="Rhea" id="RHEA-COMP:12847"/>
        <dbReference type="ChEBI" id="CHEBI:15377"/>
        <dbReference type="ChEBI" id="CHEBI:15378"/>
        <dbReference type="ChEBI" id="CHEBI:28938"/>
        <dbReference type="ChEBI" id="CHEBI:85452"/>
        <dbReference type="ChEBI" id="CHEBI:133902"/>
        <dbReference type="EC" id="3.5.4.38"/>
    </reaction>
</comment>
<comment type="cofactor">
    <cofactor evidence="1">
        <name>Zn(2+)</name>
        <dbReference type="ChEBI" id="CHEBI:29105"/>
    </cofactor>
</comment>
<comment type="subunit">
    <text evidence="1">Homodimer.</text>
</comment>
<comment type="subcellular location">
    <subcellularLocation>
        <location evidence="1">Cytoplasm</location>
    </subcellularLocation>
</comment>
<comment type="domain">
    <text evidence="1">The CMP/dCMP deaminase domain 1 confers deoxycytidine deaminase activity, whereas the CMP/dCMP deaminase domain 2 mediates RNA-dependent oligomerization and virion incorporation.</text>
</comment>
<comment type="miscellaneous">
    <text>Probable human APOBEC3G ortholog.</text>
</comment>
<comment type="similarity">
    <text evidence="4">Belongs to the cytidine and deoxycytidylate deaminase family.</text>
</comment>
<reference key="1">
    <citation type="submission" date="2004-02" db="UniProtKB">
        <authorList>
            <person name="Mariani R."/>
            <person name="Landau N.R."/>
        </authorList>
    </citation>
    <scope>NUCLEOTIDE SEQUENCE</scope>
    <source>
        <tissue>Ovarian carcinoma</tissue>
    </source>
</reference>
<reference key="2">
    <citation type="journal article" date="2003" name="Cell">
        <title>Species-specific exclusion of APOBEC3G from HIV-1 virions by Vif.</title>
        <authorList>
            <person name="Mariani R."/>
            <person name="Chen D."/>
            <person name="Schroefelbauer B."/>
            <person name="Navarro F."/>
            <person name="Koenig R."/>
            <person name="Bollman B."/>
            <person name="Muenk C."/>
            <person name="Nymark-McMahon H."/>
            <person name="Landau N.R."/>
        </authorList>
    </citation>
    <scope>FUNCTION</scope>
</reference>
<accession>P60704</accession>
<gene>
    <name type="primary">APOBEC3</name>
</gene>